<comment type="function">
    <text evidence="1">Catalyzes the condensation of (S)-aspartate-beta-semialdehyde [(S)-ASA] and pyruvate to 4-hydroxy-tetrahydrodipicolinate (HTPA).</text>
</comment>
<comment type="catalytic activity">
    <reaction evidence="1">
        <text>L-aspartate 4-semialdehyde + pyruvate = (2S,4S)-4-hydroxy-2,3,4,5-tetrahydrodipicolinate + H2O + H(+)</text>
        <dbReference type="Rhea" id="RHEA:34171"/>
        <dbReference type="ChEBI" id="CHEBI:15361"/>
        <dbReference type="ChEBI" id="CHEBI:15377"/>
        <dbReference type="ChEBI" id="CHEBI:15378"/>
        <dbReference type="ChEBI" id="CHEBI:67139"/>
        <dbReference type="ChEBI" id="CHEBI:537519"/>
        <dbReference type="EC" id="4.3.3.7"/>
    </reaction>
</comment>
<comment type="pathway">
    <text evidence="1">Amino-acid biosynthesis; L-lysine biosynthesis via DAP pathway; (S)-tetrahydrodipicolinate from L-aspartate: step 3/4.</text>
</comment>
<comment type="subunit">
    <text evidence="1">Homotetramer; dimer of dimers.</text>
</comment>
<comment type="subcellular location">
    <subcellularLocation>
        <location evidence="1">Cytoplasm</location>
    </subcellularLocation>
</comment>
<comment type="similarity">
    <text evidence="1">Belongs to the DapA family.</text>
</comment>
<comment type="caution">
    <text evidence="2">Was originally thought to be a dihydrodipicolinate synthase (DHDPS), catalyzing the condensation of (S)-aspartate-beta-semialdehyde [(S)-ASA] and pyruvate to dihydrodipicolinate (DHDP). However, it was shown in E.coli that the product of the enzymatic reaction is not dihydrodipicolinate but in fact (4S)-4-hydroxy-2,3,4,5-tetrahydro-(2S)-dipicolinic acid (HTPA), and that the consecutive dehydration reaction leading to DHDP is not spontaneous but catalyzed by DapB.</text>
</comment>
<proteinExistence type="inferred from homology"/>
<gene>
    <name evidence="1" type="primary">dapA2</name>
    <name type="ordered locus">SCO5744</name>
    <name type="ORF">SC9A10.08</name>
</gene>
<sequence>MAPTSTPQTPFGRVLTAMVTPFTADGALDLDGAQRLAAHLVDAGNDGLIINGTTGESPTTSDAEKADLVRAVVEAVGDRAHVVAGVGTNNTQHSIELARAAERVGAHGLLLVTPYYNKPPQEGLYLHFTAIADAAGLPVMLYDIPGRSGVPINTETLVRLAEHPRIVANKDAKGDLGRASWAIARSGLAWYSGDDMLNLPLLAVGAVGFVSVVGHVVTPELRAMVDAHVAGDVQKALEIHQKLLPVFTGMFRTQGVMTTKGALALQGLPAGPLRAPMVGLTPEETEQLKIDLAAGGVQL</sequence>
<accession>O86841</accession>
<name>DAPA2_STRCO</name>
<organism>
    <name type="scientific">Streptomyces coelicolor (strain ATCC BAA-471 / A3(2) / M145)</name>
    <dbReference type="NCBI Taxonomy" id="100226"/>
    <lineage>
        <taxon>Bacteria</taxon>
        <taxon>Bacillati</taxon>
        <taxon>Actinomycetota</taxon>
        <taxon>Actinomycetes</taxon>
        <taxon>Kitasatosporales</taxon>
        <taxon>Streptomycetaceae</taxon>
        <taxon>Streptomyces</taxon>
        <taxon>Streptomyces albidoflavus group</taxon>
    </lineage>
</organism>
<feature type="chain" id="PRO_0000103165" description="4-hydroxy-tetrahydrodipicolinate synthase 2">
    <location>
        <begin position="1"/>
        <end position="299"/>
    </location>
</feature>
<feature type="active site" description="Proton donor/acceptor" evidence="1">
    <location>
        <position position="142"/>
    </location>
</feature>
<feature type="active site" description="Schiff-base intermediate with substrate" evidence="1">
    <location>
        <position position="170"/>
    </location>
</feature>
<feature type="binding site" evidence="1">
    <location>
        <position position="54"/>
    </location>
    <ligand>
        <name>pyruvate</name>
        <dbReference type="ChEBI" id="CHEBI:15361"/>
    </ligand>
</feature>
<feature type="binding site" evidence="1">
    <location>
        <position position="210"/>
    </location>
    <ligand>
        <name>pyruvate</name>
        <dbReference type="ChEBI" id="CHEBI:15361"/>
    </ligand>
</feature>
<feature type="site" description="Part of a proton relay during catalysis" evidence="1">
    <location>
        <position position="53"/>
    </location>
</feature>
<feature type="site" description="Part of a proton relay during catalysis" evidence="1">
    <location>
        <position position="116"/>
    </location>
</feature>
<reference key="1">
    <citation type="journal article" date="2002" name="Nature">
        <title>Complete genome sequence of the model actinomycete Streptomyces coelicolor A3(2).</title>
        <authorList>
            <person name="Bentley S.D."/>
            <person name="Chater K.F."/>
            <person name="Cerdeno-Tarraga A.-M."/>
            <person name="Challis G.L."/>
            <person name="Thomson N.R."/>
            <person name="James K.D."/>
            <person name="Harris D.E."/>
            <person name="Quail M.A."/>
            <person name="Kieser H."/>
            <person name="Harper D."/>
            <person name="Bateman A."/>
            <person name="Brown S."/>
            <person name="Chandra G."/>
            <person name="Chen C.W."/>
            <person name="Collins M."/>
            <person name="Cronin A."/>
            <person name="Fraser A."/>
            <person name="Goble A."/>
            <person name="Hidalgo J."/>
            <person name="Hornsby T."/>
            <person name="Howarth S."/>
            <person name="Huang C.-H."/>
            <person name="Kieser T."/>
            <person name="Larke L."/>
            <person name="Murphy L.D."/>
            <person name="Oliver K."/>
            <person name="O'Neil S."/>
            <person name="Rabbinowitsch E."/>
            <person name="Rajandream M.A."/>
            <person name="Rutherford K.M."/>
            <person name="Rutter S."/>
            <person name="Seeger K."/>
            <person name="Saunders D."/>
            <person name="Sharp S."/>
            <person name="Squares R."/>
            <person name="Squares S."/>
            <person name="Taylor K."/>
            <person name="Warren T."/>
            <person name="Wietzorrek A."/>
            <person name="Woodward J.R."/>
            <person name="Barrell B.G."/>
            <person name="Parkhill J."/>
            <person name="Hopwood D.A."/>
        </authorList>
    </citation>
    <scope>NUCLEOTIDE SEQUENCE [LARGE SCALE GENOMIC DNA]</scope>
    <source>
        <strain>ATCC BAA-471 / A3(2) / M145</strain>
    </source>
</reference>
<dbReference type="EC" id="4.3.3.7" evidence="1"/>
<dbReference type="EMBL" id="AL939124">
    <property type="protein sequence ID" value="CAA20295.1"/>
    <property type="molecule type" value="Genomic_DNA"/>
</dbReference>
<dbReference type="PIR" id="T35844">
    <property type="entry name" value="T35844"/>
</dbReference>
<dbReference type="RefSeq" id="NP_629869.1">
    <property type="nucleotide sequence ID" value="NC_003888.3"/>
</dbReference>
<dbReference type="SMR" id="O86841"/>
<dbReference type="FunCoup" id="O86841">
    <property type="interactions" value="287"/>
</dbReference>
<dbReference type="STRING" id="100226.gene:17763400"/>
<dbReference type="PaxDb" id="100226-SCO5744"/>
<dbReference type="KEGG" id="sco:SCO5744"/>
<dbReference type="PATRIC" id="fig|100226.15.peg.5832"/>
<dbReference type="eggNOG" id="COG0329">
    <property type="taxonomic scope" value="Bacteria"/>
</dbReference>
<dbReference type="HOGENOM" id="CLU_049343_7_1_11"/>
<dbReference type="InParanoid" id="O86841"/>
<dbReference type="OrthoDB" id="9782828at2"/>
<dbReference type="PhylomeDB" id="O86841"/>
<dbReference type="UniPathway" id="UPA00034">
    <property type="reaction ID" value="UER00017"/>
</dbReference>
<dbReference type="Proteomes" id="UP000001973">
    <property type="component" value="Chromosome"/>
</dbReference>
<dbReference type="GO" id="GO:0005829">
    <property type="term" value="C:cytosol"/>
    <property type="evidence" value="ECO:0000318"/>
    <property type="project" value="GO_Central"/>
</dbReference>
<dbReference type="GO" id="GO:0008840">
    <property type="term" value="F:4-hydroxy-tetrahydrodipicolinate synthase activity"/>
    <property type="evidence" value="ECO:0000318"/>
    <property type="project" value="GO_Central"/>
</dbReference>
<dbReference type="GO" id="GO:0019877">
    <property type="term" value="P:diaminopimelate biosynthetic process"/>
    <property type="evidence" value="ECO:0007669"/>
    <property type="project" value="UniProtKB-UniRule"/>
</dbReference>
<dbReference type="GO" id="GO:0009089">
    <property type="term" value="P:lysine biosynthetic process via diaminopimelate"/>
    <property type="evidence" value="ECO:0007669"/>
    <property type="project" value="UniProtKB-UniRule"/>
</dbReference>
<dbReference type="CDD" id="cd00950">
    <property type="entry name" value="DHDPS"/>
    <property type="match status" value="1"/>
</dbReference>
<dbReference type="Gene3D" id="3.20.20.70">
    <property type="entry name" value="Aldolase class I"/>
    <property type="match status" value="1"/>
</dbReference>
<dbReference type="HAMAP" id="MF_00418">
    <property type="entry name" value="DapA"/>
    <property type="match status" value="1"/>
</dbReference>
<dbReference type="InterPro" id="IPR013785">
    <property type="entry name" value="Aldolase_TIM"/>
</dbReference>
<dbReference type="InterPro" id="IPR005263">
    <property type="entry name" value="DapA"/>
</dbReference>
<dbReference type="InterPro" id="IPR002220">
    <property type="entry name" value="DapA-like"/>
</dbReference>
<dbReference type="InterPro" id="IPR020625">
    <property type="entry name" value="Schiff_base-form_aldolases_AS"/>
</dbReference>
<dbReference type="InterPro" id="IPR020624">
    <property type="entry name" value="Schiff_base-form_aldolases_CS"/>
</dbReference>
<dbReference type="NCBIfam" id="TIGR00674">
    <property type="entry name" value="dapA"/>
    <property type="match status" value="1"/>
</dbReference>
<dbReference type="PANTHER" id="PTHR12128:SF66">
    <property type="entry name" value="4-HYDROXY-2-OXOGLUTARATE ALDOLASE, MITOCHONDRIAL"/>
    <property type="match status" value="1"/>
</dbReference>
<dbReference type="PANTHER" id="PTHR12128">
    <property type="entry name" value="DIHYDRODIPICOLINATE SYNTHASE"/>
    <property type="match status" value="1"/>
</dbReference>
<dbReference type="Pfam" id="PF00701">
    <property type="entry name" value="DHDPS"/>
    <property type="match status" value="1"/>
</dbReference>
<dbReference type="PIRSF" id="PIRSF001365">
    <property type="entry name" value="DHDPS"/>
    <property type="match status" value="1"/>
</dbReference>
<dbReference type="PRINTS" id="PR00146">
    <property type="entry name" value="DHPICSNTHASE"/>
</dbReference>
<dbReference type="SMART" id="SM01130">
    <property type="entry name" value="DHDPS"/>
    <property type="match status" value="1"/>
</dbReference>
<dbReference type="SUPFAM" id="SSF51569">
    <property type="entry name" value="Aldolase"/>
    <property type="match status" value="1"/>
</dbReference>
<dbReference type="PROSITE" id="PS00665">
    <property type="entry name" value="DHDPS_1"/>
    <property type="match status" value="1"/>
</dbReference>
<dbReference type="PROSITE" id="PS00666">
    <property type="entry name" value="DHDPS_2"/>
    <property type="match status" value="1"/>
</dbReference>
<evidence type="ECO:0000255" key="1">
    <source>
        <dbReference type="HAMAP-Rule" id="MF_00418"/>
    </source>
</evidence>
<evidence type="ECO:0000305" key="2"/>
<keyword id="KW-0028">Amino-acid biosynthesis</keyword>
<keyword id="KW-0963">Cytoplasm</keyword>
<keyword id="KW-0220">Diaminopimelate biosynthesis</keyword>
<keyword id="KW-0456">Lyase</keyword>
<keyword id="KW-0457">Lysine biosynthesis</keyword>
<keyword id="KW-1185">Reference proteome</keyword>
<keyword id="KW-0704">Schiff base</keyword>
<protein>
    <recommendedName>
        <fullName evidence="1">4-hydroxy-tetrahydrodipicolinate synthase 2</fullName>
        <shortName evidence="1">HTPA synthase 2</shortName>
        <ecNumber evidence="1">4.3.3.7</ecNumber>
    </recommendedName>
</protein>